<proteinExistence type="inferred from homology"/>
<keyword id="KW-0067">ATP-binding</keyword>
<keyword id="KW-0997">Cell inner membrane</keyword>
<keyword id="KW-1003">Cell membrane</keyword>
<keyword id="KW-0418">Kinase</keyword>
<keyword id="KW-0472">Membrane</keyword>
<keyword id="KW-0547">Nucleotide-binding</keyword>
<keyword id="KW-1185">Reference proteome</keyword>
<keyword id="KW-0808">Transferase</keyword>
<keyword id="KW-0812">Transmembrane</keyword>
<keyword id="KW-1133">Transmembrane helix</keyword>
<keyword id="KW-0831">Ubiquinone biosynthesis</keyword>
<comment type="function">
    <text evidence="1">Is probably a protein kinase regulator of UbiI activity which is involved in aerobic coenzyme Q (ubiquinone) biosynthesis.</text>
</comment>
<comment type="pathway">
    <text>Cofactor biosynthesis; ubiquinone biosynthesis [regulation].</text>
</comment>
<comment type="subcellular location">
    <subcellularLocation>
        <location evidence="1">Cell inner membrane</location>
        <topology evidence="1">Multi-pass membrane protein</topology>
    </subcellularLocation>
</comment>
<comment type="similarity">
    <text evidence="1">Belongs to the ABC1 family. UbiB subfamily.</text>
</comment>
<accession>B3PH50</accession>
<dbReference type="EC" id="2.7.-.-" evidence="1"/>
<dbReference type="EMBL" id="CP000934">
    <property type="protein sequence ID" value="ACE85983.1"/>
    <property type="molecule type" value="Genomic_DNA"/>
</dbReference>
<dbReference type="RefSeq" id="WP_012489220.1">
    <property type="nucleotide sequence ID" value="NC_010995.1"/>
</dbReference>
<dbReference type="SMR" id="B3PH50"/>
<dbReference type="STRING" id="498211.CJA_3645"/>
<dbReference type="KEGG" id="cja:CJA_3645"/>
<dbReference type="eggNOG" id="COG0661">
    <property type="taxonomic scope" value="Bacteria"/>
</dbReference>
<dbReference type="HOGENOM" id="CLU_006533_0_0_6"/>
<dbReference type="OrthoDB" id="9795390at2"/>
<dbReference type="UniPathway" id="UPA00232"/>
<dbReference type="Proteomes" id="UP000001036">
    <property type="component" value="Chromosome"/>
</dbReference>
<dbReference type="GO" id="GO:0005886">
    <property type="term" value="C:plasma membrane"/>
    <property type="evidence" value="ECO:0007669"/>
    <property type="project" value="UniProtKB-SubCell"/>
</dbReference>
<dbReference type="GO" id="GO:0005524">
    <property type="term" value="F:ATP binding"/>
    <property type="evidence" value="ECO:0007669"/>
    <property type="project" value="UniProtKB-KW"/>
</dbReference>
<dbReference type="GO" id="GO:0004672">
    <property type="term" value="F:protein kinase activity"/>
    <property type="evidence" value="ECO:0007669"/>
    <property type="project" value="UniProtKB-UniRule"/>
</dbReference>
<dbReference type="GO" id="GO:0010795">
    <property type="term" value="P:regulation of ubiquinone biosynthetic process"/>
    <property type="evidence" value="ECO:0007669"/>
    <property type="project" value="UniProtKB-UniRule"/>
</dbReference>
<dbReference type="GO" id="GO:0006744">
    <property type="term" value="P:ubiquinone biosynthetic process"/>
    <property type="evidence" value="ECO:0007669"/>
    <property type="project" value="UniProtKB-UniPathway"/>
</dbReference>
<dbReference type="CDD" id="cd13972">
    <property type="entry name" value="UbiB"/>
    <property type="match status" value="1"/>
</dbReference>
<dbReference type="HAMAP" id="MF_00414">
    <property type="entry name" value="UbiB"/>
    <property type="match status" value="1"/>
</dbReference>
<dbReference type="InterPro" id="IPR004147">
    <property type="entry name" value="ABC1_dom"/>
</dbReference>
<dbReference type="InterPro" id="IPR011009">
    <property type="entry name" value="Kinase-like_dom_sf"/>
</dbReference>
<dbReference type="InterPro" id="IPR010232">
    <property type="entry name" value="UbiB"/>
</dbReference>
<dbReference type="InterPro" id="IPR045308">
    <property type="entry name" value="UbiB_bact"/>
</dbReference>
<dbReference type="InterPro" id="IPR050154">
    <property type="entry name" value="UbiB_kinase"/>
</dbReference>
<dbReference type="NCBIfam" id="NF003404">
    <property type="entry name" value="PRK04750.1"/>
    <property type="match status" value="1"/>
</dbReference>
<dbReference type="NCBIfam" id="TIGR01982">
    <property type="entry name" value="UbiB"/>
    <property type="match status" value="1"/>
</dbReference>
<dbReference type="PANTHER" id="PTHR10566">
    <property type="entry name" value="CHAPERONE-ACTIVITY OF BC1 COMPLEX CABC1 -RELATED"/>
    <property type="match status" value="1"/>
</dbReference>
<dbReference type="PANTHER" id="PTHR10566:SF113">
    <property type="entry name" value="PROTEIN ACTIVITY OF BC1 COMPLEX KINASE 7, CHLOROPLASTIC"/>
    <property type="match status" value="1"/>
</dbReference>
<dbReference type="Pfam" id="PF03109">
    <property type="entry name" value="ABC1"/>
    <property type="match status" value="1"/>
</dbReference>
<dbReference type="SUPFAM" id="SSF56112">
    <property type="entry name" value="Protein kinase-like (PK-like)"/>
    <property type="match status" value="1"/>
</dbReference>
<protein>
    <recommendedName>
        <fullName evidence="1">Probable protein kinase UbiB</fullName>
        <ecNumber evidence="1">2.7.-.-</ecNumber>
    </recommendedName>
    <alternativeName>
        <fullName evidence="1">Ubiquinone biosynthesis protein UbiB</fullName>
    </alternativeName>
</protein>
<evidence type="ECO:0000255" key="1">
    <source>
        <dbReference type="HAMAP-Rule" id="MF_00414"/>
    </source>
</evidence>
<name>UBIB_CELJU</name>
<organism>
    <name type="scientific">Cellvibrio japonicus (strain Ueda107)</name>
    <name type="common">Pseudomonas fluorescens subsp. cellulosa</name>
    <dbReference type="NCBI Taxonomy" id="498211"/>
    <lineage>
        <taxon>Bacteria</taxon>
        <taxon>Pseudomonadati</taxon>
        <taxon>Pseudomonadota</taxon>
        <taxon>Gammaproteobacteria</taxon>
        <taxon>Cellvibrionales</taxon>
        <taxon>Cellvibrionaceae</taxon>
        <taxon>Cellvibrio</taxon>
    </lineage>
</organism>
<gene>
    <name evidence="1" type="primary">ubiB</name>
    <name type="ordered locus">CJA_3645</name>
</gene>
<reference key="1">
    <citation type="journal article" date="2008" name="J. Bacteriol.">
        <title>Insights into plant cell wall degradation from the genome sequence of the soil bacterium Cellvibrio japonicus.</title>
        <authorList>
            <person name="DeBoy R.T."/>
            <person name="Mongodin E.F."/>
            <person name="Fouts D.E."/>
            <person name="Tailford L.E."/>
            <person name="Khouri H."/>
            <person name="Emerson J.B."/>
            <person name="Mohamoud Y."/>
            <person name="Watkins K."/>
            <person name="Henrissat B."/>
            <person name="Gilbert H.J."/>
            <person name="Nelson K.E."/>
        </authorList>
    </citation>
    <scope>NUCLEOTIDE SEQUENCE [LARGE SCALE GENOMIC DNA]</scope>
    <source>
        <strain>Ueda107</strain>
    </source>
</reference>
<feature type="chain" id="PRO_1000123900" description="Probable protein kinase UbiB">
    <location>
        <begin position="1"/>
        <end position="552"/>
    </location>
</feature>
<feature type="transmembrane region" description="Helical" evidence="1">
    <location>
        <begin position="22"/>
        <end position="42"/>
    </location>
</feature>
<feature type="transmembrane region" description="Helical" evidence="1">
    <location>
        <begin position="501"/>
        <end position="521"/>
    </location>
</feature>
<feature type="transmembrane region" description="Helical" evidence="1">
    <location>
        <begin position="530"/>
        <end position="550"/>
    </location>
</feature>
<feature type="domain" description="Protein kinase" evidence="1">
    <location>
        <begin position="118"/>
        <end position="498"/>
    </location>
</feature>
<feature type="active site" description="Proton acceptor" evidence="1">
    <location>
        <position position="281"/>
    </location>
</feature>
<feature type="binding site" evidence="1">
    <location>
        <begin position="124"/>
        <end position="132"/>
    </location>
    <ligand>
        <name>ATP</name>
        <dbReference type="ChEBI" id="CHEBI:30616"/>
    </ligand>
</feature>
<feature type="binding site" evidence="1">
    <location>
        <position position="146"/>
    </location>
    <ligand>
        <name>ATP</name>
        <dbReference type="ChEBI" id="CHEBI:30616"/>
    </ligand>
</feature>
<sequence length="552" mass="63347">MIAFLRLLKILRVFARYRLDQLLPANLPLAATLLLLPFKLFPQPRLSRGERLRRACEDLGPIFVKFGQLLSTRPDLVPADIVLELNHLQDNVTPFSKGEFQRIVESSLGASVAEVFASFNIEPLASASVAQVHTAVLKDGREVVIKVIRPGIDKVIAQDIALLLRVARWVENNTLDGKRLHPVEIVEDYRTTIFDELDLQREAANGSQLRRNFLNSPLLYVPEVYWEYTRTNVLVMERIYGIPVTDLAALNAQQTDMKKLAERGVEIFFTQVFEHNFFHADMHPGNIFVAHEHPSAPQYIAVDMAIVGSLTRADQYYLARNLLAMFRRDYRQVAELHVESGWVPSHVRVEELEAAVRTVCEPIFEKPLKEISFAQVLLNLFRTARRFEMEVQPQLVLLQKTLLNIEGLGRQLYPDLDLWATAHPFLERWLKNRFHPKSLWRELKRYAPEWMEKFPQVPNLVFNGLQQLQNLGELAPRLEEATHAYKAQQQLARQRNRRRVITLLAFAGAIALAWPSLGEGIRHWANHFSFGDIPTASYLLAAIGLSAWLLKR</sequence>